<feature type="chain" id="PRO_1000003610" description="Small ribosomal subunit protein bS18">
    <location>
        <begin position="1"/>
        <end position="75"/>
    </location>
</feature>
<organism>
    <name type="scientific">Shigella boydii serotype 4 (strain Sb227)</name>
    <dbReference type="NCBI Taxonomy" id="300268"/>
    <lineage>
        <taxon>Bacteria</taxon>
        <taxon>Pseudomonadati</taxon>
        <taxon>Pseudomonadota</taxon>
        <taxon>Gammaproteobacteria</taxon>
        <taxon>Enterobacterales</taxon>
        <taxon>Enterobacteriaceae</taxon>
        <taxon>Shigella</taxon>
    </lineage>
</organism>
<accession>Q31TD3</accession>
<comment type="function">
    <text evidence="1">Binds as a heterodimer with protein bS6 to the central domain of the 16S rRNA, where it helps stabilize the platform of the 30S subunit.</text>
</comment>
<comment type="subunit">
    <text evidence="1">Part of the 30S ribosomal subunit. Forms a tight heterodimer with protein bS6.</text>
</comment>
<comment type="similarity">
    <text evidence="1">Belongs to the bacterial ribosomal protein bS18 family.</text>
</comment>
<keyword id="KW-0687">Ribonucleoprotein</keyword>
<keyword id="KW-0689">Ribosomal protein</keyword>
<keyword id="KW-0694">RNA-binding</keyword>
<keyword id="KW-0699">rRNA-binding</keyword>
<dbReference type="EMBL" id="CP000036">
    <property type="protein sequence ID" value="ABB68675.1"/>
    <property type="molecule type" value="Genomic_DNA"/>
</dbReference>
<dbReference type="RefSeq" id="WP_000135199.1">
    <property type="nucleotide sequence ID" value="NC_007613.1"/>
</dbReference>
<dbReference type="SMR" id="Q31TD3"/>
<dbReference type="GeneID" id="98186237"/>
<dbReference type="KEGG" id="sbo:SBO_4252"/>
<dbReference type="HOGENOM" id="CLU_148710_2_3_6"/>
<dbReference type="Proteomes" id="UP000007067">
    <property type="component" value="Chromosome"/>
</dbReference>
<dbReference type="GO" id="GO:0022627">
    <property type="term" value="C:cytosolic small ribosomal subunit"/>
    <property type="evidence" value="ECO:0007669"/>
    <property type="project" value="TreeGrafter"/>
</dbReference>
<dbReference type="GO" id="GO:0070181">
    <property type="term" value="F:small ribosomal subunit rRNA binding"/>
    <property type="evidence" value="ECO:0007669"/>
    <property type="project" value="TreeGrafter"/>
</dbReference>
<dbReference type="GO" id="GO:0003735">
    <property type="term" value="F:structural constituent of ribosome"/>
    <property type="evidence" value="ECO:0007669"/>
    <property type="project" value="InterPro"/>
</dbReference>
<dbReference type="GO" id="GO:0006412">
    <property type="term" value="P:translation"/>
    <property type="evidence" value="ECO:0007669"/>
    <property type="project" value="UniProtKB-UniRule"/>
</dbReference>
<dbReference type="FunFam" id="4.10.640.10:FF:000001">
    <property type="entry name" value="30S ribosomal protein S18"/>
    <property type="match status" value="1"/>
</dbReference>
<dbReference type="Gene3D" id="4.10.640.10">
    <property type="entry name" value="Ribosomal protein S18"/>
    <property type="match status" value="1"/>
</dbReference>
<dbReference type="HAMAP" id="MF_00270">
    <property type="entry name" value="Ribosomal_bS18"/>
    <property type="match status" value="1"/>
</dbReference>
<dbReference type="InterPro" id="IPR001648">
    <property type="entry name" value="Ribosomal_bS18"/>
</dbReference>
<dbReference type="InterPro" id="IPR018275">
    <property type="entry name" value="Ribosomal_bS18_CS"/>
</dbReference>
<dbReference type="InterPro" id="IPR036870">
    <property type="entry name" value="Ribosomal_bS18_sf"/>
</dbReference>
<dbReference type="NCBIfam" id="TIGR00165">
    <property type="entry name" value="S18"/>
    <property type="match status" value="1"/>
</dbReference>
<dbReference type="PANTHER" id="PTHR13479">
    <property type="entry name" value="30S RIBOSOMAL PROTEIN S18"/>
    <property type="match status" value="1"/>
</dbReference>
<dbReference type="PANTHER" id="PTHR13479:SF40">
    <property type="entry name" value="SMALL RIBOSOMAL SUBUNIT PROTEIN BS18M"/>
    <property type="match status" value="1"/>
</dbReference>
<dbReference type="Pfam" id="PF01084">
    <property type="entry name" value="Ribosomal_S18"/>
    <property type="match status" value="1"/>
</dbReference>
<dbReference type="PRINTS" id="PR00974">
    <property type="entry name" value="RIBOSOMALS18"/>
</dbReference>
<dbReference type="SUPFAM" id="SSF46911">
    <property type="entry name" value="Ribosomal protein S18"/>
    <property type="match status" value="1"/>
</dbReference>
<dbReference type="PROSITE" id="PS00057">
    <property type="entry name" value="RIBOSOMAL_S18"/>
    <property type="match status" value="1"/>
</dbReference>
<gene>
    <name evidence="1" type="primary">rpsR</name>
    <name type="ordered locus">SBO_4252</name>
</gene>
<evidence type="ECO:0000255" key="1">
    <source>
        <dbReference type="HAMAP-Rule" id="MF_00270"/>
    </source>
</evidence>
<evidence type="ECO:0000305" key="2"/>
<name>RS18_SHIBS</name>
<reference key="1">
    <citation type="journal article" date="2005" name="Nucleic Acids Res.">
        <title>Genome dynamics and diversity of Shigella species, the etiologic agents of bacillary dysentery.</title>
        <authorList>
            <person name="Yang F."/>
            <person name="Yang J."/>
            <person name="Zhang X."/>
            <person name="Chen L."/>
            <person name="Jiang Y."/>
            <person name="Yan Y."/>
            <person name="Tang X."/>
            <person name="Wang J."/>
            <person name="Xiong Z."/>
            <person name="Dong J."/>
            <person name="Xue Y."/>
            <person name="Zhu Y."/>
            <person name="Xu X."/>
            <person name="Sun L."/>
            <person name="Chen S."/>
            <person name="Nie H."/>
            <person name="Peng J."/>
            <person name="Xu J."/>
            <person name="Wang Y."/>
            <person name="Yuan Z."/>
            <person name="Wen Y."/>
            <person name="Yao Z."/>
            <person name="Shen Y."/>
            <person name="Qiang B."/>
            <person name="Hou Y."/>
            <person name="Yu J."/>
            <person name="Jin Q."/>
        </authorList>
    </citation>
    <scope>NUCLEOTIDE SEQUENCE [LARGE SCALE GENOMIC DNA]</scope>
    <source>
        <strain>Sb227</strain>
    </source>
</reference>
<proteinExistence type="inferred from homology"/>
<sequence length="75" mass="8986">MARYFRRRKFCRFTAEGVQEIDYKDIATLKNYITESGKIVPSRITGTRAKYQRQLARAIKRARYLSLLPYTDRHQ</sequence>
<protein>
    <recommendedName>
        <fullName evidence="1">Small ribosomal subunit protein bS18</fullName>
    </recommendedName>
    <alternativeName>
        <fullName evidence="2">30S ribosomal protein S18</fullName>
    </alternativeName>
</protein>